<sequence length="816" mass="91395">MGDTVVEPAPLKPTSEPTSGPPGNNGGSLLSVITEGVGELSVIDPEVAQKACQDVLEKVKLLHGGMAVSSKGAPLELVNGDGVDSEIRCLDDPPAQIREEEDEMGATVASGTAKGARRRRQNNSAKQSWLLRLFESKLFDISMAISYLYNSKEPGVQAYIGNRLFCFRNEDVDFYLPQLLNMYIHMDEDVGDAIKPYIVYRCRQSINFSLQCALLLGAYSSDMHISTQRHSRGTKLRKLILSDELKPAHRKRELPSLSPAPDTGLSPSKRTHQRSKSDATASISLSSNLKRTASNPKVENEDEELSSSTESIDNSFSSPVRLAPEREFIKSLMAIGKRLATLPTKEQKTQRLISELSLLNHKLPARVWLPTAGFDHHVVRVPHTQAVVLNSKDKAPYLIYVEVLECENFDTTSVPARIPENRIRSTRSVENLPECGITHEQRAGSFSTVPNYDNDDEAWSVDDIGELQVELPEVHTNSCDNISQFSVDSITSQESKEPVFIAAGDIRRRLSEQLAHTPTAFKRDPEDPSAVALKEPWQEKVRRIREGSPYGHLPNWRLLSVIVKCGDDLRQELLAFQVLKQLQSIWEQERVPLWIKPYKILVISADSGMIEPVVNAVSIHQVKKQSQLSLLDYFLQEHGSYTTEAFLSAQRNFVQSCAGYCLVCYLLQVKDRHNGNILLDAEGHIIHIDFGFILSSSPRNLGFETSAFKLTTEFVDVMGGLDGDMFNYYKMLMLQGLIAARKHMDKVVQIVEIMQQGSQLPCFHGSSTIRNLKERFHMSMTEEQLQLLVEQMVDGSMRSITTKLYDGFQYLTNGIM</sequence>
<protein>
    <recommendedName>
        <fullName>Phosphatidylinositol 4-kinase beta</fullName>
        <shortName>PI4K-beta</shortName>
        <shortName>PI4Kbeta</shortName>
        <shortName>PtdIns 4-kinase beta</shortName>
        <ecNumber evidence="5">2.7.1.67</ecNumber>
    </recommendedName>
</protein>
<accession>B1MTG7</accession>
<comment type="function">
    <text evidence="3 5">Phosphorylates phosphatidylinositol (PI) in the first committed step in the production of the second messenger inositol-1,4,5,-trisphosphate (PIP). May regulate Golgi disintegration/reorganization during mitosis, possibly via its phosphorylation (By similarity). Involved in Golgi-to-plasma membrane trafficking (By similarity).</text>
</comment>
<comment type="catalytic activity">
    <reaction evidence="5">
        <text>a 1,2-diacyl-sn-glycero-3-phospho-(1D-myo-inositol) + ATP = a 1,2-diacyl-sn-glycero-3-phospho-(1D-myo-inositol 4-phosphate) + ADP + H(+)</text>
        <dbReference type="Rhea" id="RHEA:19877"/>
        <dbReference type="ChEBI" id="CHEBI:15378"/>
        <dbReference type="ChEBI" id="CHEBI:30616"/>
        <dbReference type="ChEBI" id="CHEBI:57880"/>
        <dbReference type="ChEBI" id="CHEBI:58178"/>
        <dbReference type="ChEBI" id="CHEBI:456216"/>
        <dbReference type="EC" id="2.7.1.67"/>
    </reaction>
    <physiologicalReaction direction="left-to-right" evidence="5">
        <dbReference type="Rhea" id="RHEA:19878"/>
    </physiologicalReaction>
</comment>
<comment type="cofactor">
    <cofactor evidence="5">
        <name>Mg(2+)</name>
        <dbReference type="ChEBI" id="CHEBI:18420"/>
    </cofactor>
    <cofactor evidence="5">
        <name>Mn(2+)</name>
        <dbReference type="ChEBI" id="CHEBI:29035"/>
    </cofactor>
</comment>
<comment type="activity regulation">
    <text evidence="2">Inhibited by wortmannin. Increased kinase activity upon interaction with NCS1/FREQ.</text>
</comment>
<comment type="subunit">
    <text evidence="3 5">Interacts with ARF1 and ARF3 in the Golgi complex, but not with ARF4, ARF5 or ARF6 (By similarity). Interacts with NCS1/FREQ in a calcium-independent manner. Interacts with CALN1/CABP8 and CALN2/CABP7; in a calcium-dependent manner; this interaction competes with NCS1/FREQ binding (By similarity). Interacts with ACBD3. Interacts with ARMH3, YWHAB, YWHAE, YWHAG, YWHAH, YWHAQ, YWHAZ and SFN (By similarity). Interacts with GGA2 (via VHS domain); the interaction is important for PI4KB location at the Golgi apparatus membrane (By similarity). Interacts with ATG9A.</text>
</comment>
<comment type="subcellular location">
    <subcellularLocation>
        <location evidence="1">Endomembrane system</location>
    </subcellularLocation>
    <subcellularLocation>
        <location evidence="1">Mitochondrion outer membrane</location>
        <topology evidence="1">Peripheral membrane protein</topology>
    </subcellularLocation>
    <subcellularLocation>
        <location evidence="1">Rough endoplasmic reticulum membrane</location>
        <topology evidence="1">Peripheral membrane protein</topology>
    </subcellularLocation>
    <subcellularLocation>
        <location evidence="1">Golgi apparatus</location>
    </subcellularLocation>
    <subcellularLocation>
        <location evidence="5">Golgi apparatus membrane</location>
    </subcellularLocation>
    <text evidence="5">Found in the outer membrane of mitochondria and membranes of the rough endoplasmic reticulum. Recruited to the Golgi complex by the small GTPase ARF to stimulate the synthesis of phosphatidylinositol 4,5-bisphosphate (PIP2) on the Golgi complex. Recruited to the Golgi apparatus membrane by ACBD3, GGA2 is also involved in the recruitment.</text>
</comment>
<comment type="similarity">
    <text evidence="9">Belongs to the PI3/PI4-kinase family. Type III PI4K subfamily.</text>
</comment>
<dbReference type="EC" id="2.7.1.67" evidence="5"/>
<dbReference type="EMBL" id="DP000634">
    <property type="protein sequence ID" value="ACA57933.1"/>
    <property type="molecule type" value="Genomic_DNA"/>
</dbReference>
<dbReference type="SMR" id="B1MTG7"/>
<dbReference type="GO" id="GO:0000139">
    <property type="term" value="C:Golgi membrane"/>
    <property type="evidence" value="ECO:0007669"/>
    <property type="project" value="UniProtKB-SubCell"/>
</dbReference>
<dbReference type="GO" id="GO:0005741">
    <property type="term" value="C:mitochondrial outer membrane"/>
    <property type="evidence" value="ECO:0007669"/>
    <property type="project" value="UniProtKB-SubCell"/>
</dbReference>
<dbReference type="GO" id="GO:0030867">
    <property type="term" value="C:rough endoplasmic reticulum membrane"/>
    <property type="evidence" value="ECO:0007669"/>
    <property type="project" value="UniProtKB-SubCell"/>
</dbReference>
<dbReference type="GO" id="GO:0004430">
    <property type="term" value="F:1-phosphatidylinositol 4-kinase activity"/>
    <property type="evidence" value="ECO:0000250"/>
    <property type="project" value="UniProtKB"/>
</dbReference>
<dbReference type="GO" id="GO:0071889">
    <property type="term" value="F:14-3-3 protein binding"/>
    <property type="evidence" value="ECO:0000250"/>
    <property type="project" value="UniProtKB"/>
</dbReference>
<dbReference type="GO" id="GO:0005524">
    <property type="term" value="F:ATP binding"/>
    <property type="evidence" value="ECO:0007669"/>
    <property type="project" value="UniProtKB-KW"/>
</dbReference>
<dbReference type="GO" id="GO:0046854">
    <property type="term" value="P:phosphatidylinositol phosphate biosynthetic process"/>
    <property type="evidence" value="ECO:0007669"/>
    <property type="project" value="InterPro"/>
</dbReference>
<dbReference type="GO" id="GO:0048015">
    <property type="term" value="P:phosphatidylinositol-mediated signaling"/>
    <property type="evidence" value="ECO:0007669"/>
    <property type="project" value="TreeGrafter"/>
</dbReference>
<dbReference type="CDD" id="cd22246">
    <property type="entry name" value="PI4KB_NTD"/>
    <property type="match status" value="1"/>
</dbReference>
<dbReference type="CDD" id="cd05168">
    <property type="entry name" value="PI4Kc_III_beta"/>
    <property type="match status" value="1"/>
</dbReference>
<dbReference type="FunFam" id="3.30.1010.10:FF:000031">
    <property type="entry name" value="Phosphatidylinositol 4-kinase beta"/>
    <property type="match status" value="1"/>
</dbReference>
<dbReference type="FunFam" id="1.10.1070.11:FF:000004">
    <property type="entry name" value="Phosphatidylinositol 4-kinase, catalytic, beta"/>
    <property type="match status" value="1"/>
</dbReference>
<dbReference type="Gene3D" id="1.10.1070.11">
    <property type="entry name" value="Phosphatidylinositol 3-/4-kinase, catalytic domain"/>
    <property type="match status" value="1"/>
</dbReference>
<dbReference type="Gene3D" id="3.30.1010.10">
    <property type="entry name" value="Phosphatidylinositol 3-kinase Catalytic Subunit, Chain A, domain 4"/>
    <property type="match status" value="1"/>
</dbReference>
<dbReference type="InterPro" id="IPR011009">
    <property type="entry name" value="Kinase-like_dom_sf"/>
</dbReference>
<dbReference type="InterPro" id="IPR000403">
    <property type="entry name" value="PI3/4_kinase_cat_dom"/>
</dbReference>
<dbReference type="InterPro" id="IPR036940">
    <property type="entry name" value="PI3/4_kinase_cat_sf"/>
</dbReference>
<dbReference type="InterPro" id="IPR018936">
    <property type="entry name" value="PI3/4_kinase_CS"/>
</dbReference>
<dbReference type="InterPro" id="IPR001263">
    <property type="entry name" value="PI3K_accessory_dom"/>
</dbReference>
<dbReference type="InterPro" id="IPR049160">
    <property type="entry name" value="PI4KB-PIK1_PIK"/>
</dbReference>
<dbReference type="InterPro" id="IPR015433">
    <property type="entry name" value="PI_Kinase"/>
</dbReference>
<dbReference type="PANTHER" id="PTHR10048:SF22">
    <property type="entry name" value="PHOSPHATIDYLINOSITOL 4-KINASE BETA"/>
    <property type="match status" value="1"/>
</dbReference>
<dbReference type="PANTHER" id="PTHR10048">
    <property type="entry name" value="PHOSPHATIDYLINOSITOL KINASE"/>
    <property type="match status" value="1"/>
</dbReference>
<dbReference type="Pfam" id="PF00454">
    <property type="entry name" value="PI3_PI4_kinase"/>
    <property type="match status" value="1"/>
</dbReference>
<dbReference type="Pfam" id="PF21245">
    <property type="entry name" value="PI4KB-PIK1_PIK"/>
    <property type="match status" value="1"/>
</dbReference>
<dbReference type="SMART" id="SM00146">
    <property type="entry name" value="PI3Kc"/>
    <property type="match status" value="1"/>
</dbReference>
<dbReference type="SUPFAM" id="SSF56112">
    <property type="entry name" value="Protein kinase-like (PK-like)"/>
    <property type="match status" value="1"/>
</dbReference>
<dbReference type="PROSITE" id="PS00915">
    <property type="entry name" value="PI3_4_KINASE_1"/>
    <property type="match status" value="1"/>
</dbReference>
<dbReference type="PROSITE" id="PS00916">
    <property type="entry name" value="PI3_4_KINASE_2"/>
    <property type="match status" value="1"/>
</dbReference>
<dbReference type="PROSITE" id="PS50290">
    <property type="entry name" value="PI3_4_KINASE_3"/>
    <property type="match status" value="1"/>
</dbReference>
<dbReference type="PROSITE" id="PS51545">
    <property type="entry name" value="PIK_HELICAL"/>
    <property type="match status" value="1"/>
</dbReference>
<proteinExistence type="inferred from homology"/>
<reference key="1">
    <citation type="submission" date="2008-03" db="EMBL/GenBank/DDBJ databases">
        <title>NISC comparative sequencing initiative.</title>
        <authorList>
            <person name="Antonellis A."/>
            <person name="Benjamin B."/>
            <person name="Blakesley R.W."/>
            <person name="Bouffard G.G."/>
            <person name="Brinkley C."/>
            <person name="Brooks S."/>
            <person name="Chu G."/>
            <person name="Chub I."/>
            <person name="Coleman H."/>
            <person name="Fuksenko T."/>
            <person name="Gestole M."/>
            <person name="Gregory M."/>
            <person name="Guan X."/>
            <person name="Gupta J."/>
            <person name="Gurson N."/>
            <person name="Han E."/>
            <person name="Han J."/>
            <person name="Hansen N."/>
            <person name="Hargrove A."/>
            <person name="Hines-Harris K."/>
            <person name="Ho S.-L."/>
            <person name="Hu P."/>
            <person name="Hunter G."/>
            <person name="Hurle B."/>
            <person name="Idol J.R."/>
            <person name="Johnson T."/>
            <person name="Knight E."/>
            <person name="Kwong P."/>
            <person name="Lee-Lin S.-Q."/>
            <person name="Legaspi R."/>
            <person name="Madden M."/>
            <person name="Maduro Q.L."/>
            <person name="Maduro V.B."/>
            <person name="Margulies E.H."/>
            <person name="Masiello C."/>
            <person name="Maskeri B."/>
            <person name="McDowell J."/>
            <person name="Merkulov G."/>
            <person name="Montemayor C."/>
            <person name="Mullikin J.C."/>
            <person name="Park M."/>
            <person name="Prasad A."/>
            <person name="Ramsahoye C."/>
            <person name="Reddix-Dugue N."/>
            <person name="Riebow N."/>
            <person name="Schandler K."/>
            <person name="Schueler M.G."/>
            <person name="Sison C."/>
            <person name="Smith L."/>
            <person name="Stantripop S."/>
            <person name="Thomas J.W."/>
            <person name="Thomas P.J."/>
            <person name="Tsipouri V."/>
            <person name="Young A."/>
            <person name="Green E.D."/>
        </authorList>
    </citation>
    <scope>NUCLEOTIDE SEQUENCE [LARGE SCALE GENOMIC DNA]</scope>
</reference>
<keyword id="KW-0007">Acetylation</keyword>
<keyword id="KW-0067">ATP-binding</keyword>
<keyword id="KW-0256">Endoplasmic reticulum</keyword>
<keyword id="KW-0333">Golgi apparatus</keyword>
<keyword id="KW-0418">Kinase</keyword>
<keyword id="KW-0443">Lipid metabolism</keyword>
<keyword id="KW-0472">Membrane</keyword>
<keyword id="KW-0496">Mitochondrion</keyword>
<keyword id="KW-1000">Mitochondrion outer membrane</keyword>
<keyword id="KW-0547">Nucleotide-binding</keyword>
<keyword id="KW-0597">Phosphoprotein</keyword>
<keyword id="KW-0808">Transferase</keyword>
<name>PI4KB_PLEMO</name>
<feature type="initiator methionine" description="Removed" evidence="5">
    <location>
        <position position="1"/>
    </location>
</feature>
<feature type="chain" id="PRO_0000365164" description="Phosphatidylinositol 4-kinase beta">
    <location>
        <begin position="2"/>
        <end position="816"/>
    </location>
</feature>
<feature type="domain" description="PIK helical" evidence="7">
    <location>
        <begin position="52"/>
        <end position="242"/>
    </location>
</feature>
<feature type="domain" description="PI3K/PI4K catalytic" evidence="6">
    <location>
        <begin position="535"/>
        <end position="801"/>
    </location>
</feature>
<feature type="region of interest" description="Disordered" evidence="8">
    <location>
        <begin position="1"/>
        <end position="30"/>
    </location>
</feature>
<feature type="region of interest" description="Interaction with ACBD3" evidence="5">
    <location>
        <begin position="2"/>
        <end position="68"/>
    </location>
</feature>
<feature type="region of interest" description="Disordered" evidence="8">
    <location>
        <begin position="101"/>
        <end position="120"/>
    </location>
</feature>
<feature type="region of interest" description="Disordered" evidence="8">
    <location>
        <begin position="248"/>
        <end position="318"/>
    </location>
</feature>
<feature type="region of interest" description="G-loop" evidence="6">
    <location>
        <begin position="541"/>
        <end position="547"/>
    </location>
</feature>
<feature type="region of interest" description="Catalytic loop" evidence="6">
    <location>
        <begin position="668"/>
        <end position="676"/>
    </location>
</feature>
<feature type="region of interest" description="Activation loop" evidence="6">
    <location>
        <begin position="687"/>
        <end position="711"/>
    </location>
</feature>
<feature type="compositionally biased region" description="Polar residues" evidence="8">
    <location>
        <begin position="278"/>
        <end position="297"/>
    </location>
</feature>
<feature type="compositionally biased region" description="Polar residues" evidence="8">
    <location>
        <begin position="306"/>
        <end position="318"/>
    </location>
</feature>
<feature type="modified residue" description="N-acetylglycine" evidence="5">
    <location>
        <position position="2"/>
    </location>
</feature>
<feature type="modified residue" description="Phosphoserine" evidence="5">
    <location>
        <position position="258"/>
    </location>
</feature>
<feature type="modified residue" description="Phosphothreonine" evidence="5">
    <location>
        <position position="263"/>
    </location>
</feature>
<feature type="modified residue" description="Phosphoserine" evidence="5">
    <location>
        <position position="266"/>
    </location>
</feature>
<feature type="modified residue" description="Phosphoserine" evidence="4">
    <location>
        <position position="275"/>
    </location>
</feature>
<feature type="modified residue" description="Phosphoserine" evidence="5">
    <location>
        <position position="277"/>
    </location>
</feature>
<feature type="modified residue" description="Phosphoserine" evidence="4">
    <location>
        <position position="284"/>
    </location>
</feature>
<feature type="modified residue" description="Phosphoserine" evidence="5">
    <location>
        <position position="294"/>
    </location>
</feature>
<feature type="modified residue" description="Phosphoserine" evidence="5">
    <location>
        <position position="428"/>
    </location>
</feature>
<feature type="modified residue" description="Phosphothreonine" evidence="5">
    <location>
        <position position="438"/>
    </location>
</feature>
<feature type="modified residue" description="Phosphoserine" evidence="5">
    <location>
        <position position="511"/>
    </location>
</feature>
<feature type="modified residue" description="Phosphothreonine" evidence="5">
    <location>
        <position position="517"/>
    </location>
</feature>
<feature type="modified residue" description="Phosphothreonine" evidence="5">
    <location>
        <position position="519"/>
    </location>
</feature>
<evidence type="ECO:0000250" key="1"/>
<evidence type="ECO:0000250" key="2">
    <source>
        <dbReference type="UniProtKB" id="O02810"/>
    </source>
</evidence>
<evidence type="ECO:0000250" key="3">
    <source>
        <dbReference type="UniProtKB" id="O08561"/>
    </source>
</evidence>
<evidence type="ECO:0000250" key="4">
    <source>
        <dbReference type="UniProtKB" id="Q8BKC8"/>
    </source>
</evidence>
<evidence type="ECO:0000250" key="5">
    <source>
        <dbReference type="UniProtKB" id="Q9UBF8"/>
    </source>
</evidence>
<evidence type="ECO:0000255" key="6">
    <source>
        <dbReference type="PROSITE-ProRule" id="PRU00269"/>
    </source>
</evidence>
<evidence type="ECO:0000255" key="7">
    <source>
        <dbReference type="PROSITE-ProRule" id="PRU00878"/>
    </source>
</evidence>
<evidence type="ECO:0000256" key="8">
    <source>
        <dbReference type="SAM" id="MobiDB-lite"/>
    </source>
</evidence>
<evidence type="ECO:0000305" key="9"/>
<organism>
    <name type="scientific">Plecturocebus moloch</name>
    <name type="common">Dusky titi monkey</name>
    <name type="synonym">Callicebus moloch</name>
    <dbReference type="NCBI Taxonomy" id="9523"/>
    <lineage>
        <taxon>Eukaryota</taxon>
        <taxon>Metazoa</taxon>
        <taxon>Chordata</taxon>
        <taxon>Craniata</taxon>
        <taxon>Vertebrata</taxon>
        <taxon>Euteleostomi</taxon>
        <taxon>Mammalia</taxon>
        <taxon>Eutheria</taxon>
        <taxon>Euarchontoglires</taxon>
        <taxon>Primates</taxon>
        <taxon>Haplorrhini</taxon>
        <taxon>Platyrrhini</taxon>
        <taxon>Pitheciidae</taxon>
        <taxon>Callicebinae</taxon>
        <taxon>Plecturocebus</taxon>
    </lineage>
</organism>
<gene>
    <name type="primary">PI4KB</name>
    <name type="synonym">PIK4CB</name>
</gene>